<keyword id="KW-0963">Cytoplasm</keyword>
<keyword id="KW-1185">Reference proteome</keyword>
<feature type="chain" id="PRO_1000065356" description="UPF0298 protein BLi01717/BL02989">
    <location>
        <begin position="1"/>
        <end position="90"/>
    </location>
</feature>
<proteinExistence type="inferred from homology"/>
<protein>
    <recommendedName>
        <fullName evidence="1">UPF0298 protein BLi01717/BL02989</fullName>
    </recommendedName>
</protein>
<reference key="1">
    <citation type="journal article" date="2004" name="J. Mol. Microbiol. Biotechnol.">
        <title>The complete genome sequence of Bacillus licheniformis DSM13, an organism with great industrial potential.</title>
        <authorList>
            <person name="Veith B."/>
            <person name="Herzberg C."/>
            <person name="Steckel S."/>
            <person name="Feesche J."/>
            <person name="Maurer K.H."/>
            <person name="Ehrenreich P."/>
            <person name="Baeumer S."/>
            <person name="Henne A."/>
            <person name="Liesegang H."/>
            <person name="Merkl R."/>
            <person name="Ehrenreich A."/>
            <person name="Gottschalk G."/>
        </authorList>
    </citation>
    <scope>NUCLEOTIDE SEQUENCE [LARGE SCALE GENOMIC DNA]</scope>
    <source>
        <strain>ATCC 14580 / DSM 13 / JCM 2505 / CCUG 7422 / NBRC 12200 / NCIMB 9375 / NCTC 10341 / NRRL NRS-1264 / Gibson 46</strain>
    </source>
</reference>
<reference key="2">
    <citation type="journal article" date="2004" name="Genome Biol.">
        <title>Complete genome sequence of the industrial bacterium Bacillus licheniformis and comparisons with closely related Bacillus species.</title>
        <authorList>
            <person name="Rey M.W."/>
            <person name="Ramaiya P."/>
            <person name="Nelson B.A."/>
            <person name="Brody-Karpin S.D."/>
            <person name="Zaretsky E.J."/>
            <person name="Tang M."/>
            <person name="Lopez de Leon A."/>
            <person name="Xiang H."/>
            <person name="Gusti V."/>
            <person name="Clausen I.G."/>
            <person name="Olsen P.B."/>
            <person name="Rasmussen M.D."/>
            <person name="Andersen J.T."/>
            <person name="Joergensen P.L."/>
            <person name="Larsen T.S."/>
            <person name="Sorokin A."/>
            <person name="Bolotin A."/>
            <person name="Lapidus A."/>
            <person name="Galleron N."/>
            <person name="Ehrlich S.D."/>
            <person name="Berka R.M."/>
        </authorList>
    </citation>
    <scope>NUCLEOTIDE SEQUENCE [LARGE SCALE GENOMIC DNA]</scope>
    <source>
        <strain>ATCC 14580 / DSM 13 / JCM 2505 / CCUG 7422 / NBRC 12200 / NCIMB 9375 / NCTC 10341 / NRRL NRS-1264 / Gibson 46</strain>
    </source>
</reference>
<dbReference type="EMBL" id="CP000002">
    <property type="protein sequence ID" value="AAU23256.2"/>
    <property type="molecule type" value="Genomic_DNA"/>
</dbReference>
<dbReference type="EMBL" id="AE017333">
    <property type="protein sequence ID" value="AAU40613.1"/>
    <property type="molecule type" value="Genomic_DNA"/>
</dbReference>
<dbReference type="RefSeq" id="WP_009328559.1">
    <property type="nucleotide sequence ID" value="NC_006322.1"/>
</dbReference>
<dbReference type="SMR" id="Q65K01"/>
<dbReference type="STRING" id="279010.BL02989"/>
<dbReference type="KEGG" id="bld:BLi01717"/>
<dbReference type="KEGG" id="bli:BL02989"/>
<dbReference type="eggNOG" id="COG4471">
    <property type="taxonomic scope" value="Bacteria"/>
</dbReference>
<dbReference type="HOGENOM" id="CLU_159890_2_0_9"/>
<dbReference type="Proteomes" id="UP000000606">
    <property type="component" value="Chromosome"/>
</dbReference>
<dbReference type="GO" id="GO:0005737">
    <property type="term" value="C:cytoplasm"/>
    <property type="evidence" value="ECO:0007669"/>
    <property type="project" value="UniProtKB-SubCell"/>
</dbReference>
<dbReference type="HAMAP" id="MF_01126">
    <property type="entry name" value="UPF0298"/>
    <property type="match status" value="1"/>
</dbReference>
<dbReference type="InterPro" id="IPR016979">
    <property type="entry name" value="DUF2129"/>
</dbReference>
<dbReference type="NCBIfam" id="NF002777">
    <property type="entry name" value="PRK02886.1"/>
    <property type="match status" value="1"/>
</dbReference>
<dbReference type="Pfam" id="PF09902">
    <property type="entry name" value="DUF2129"/>
    <property type="match status" value="1"/>
</dbReference>
<dbReference type="PIRSF" id="PIRSF031653">
    <property type="entry name" value="UCP031653"/>
    <property type="match status" value="1"/>
</dbReference>
<name>Y2989_BACLD</name>
<accession>Q65K01</accession>
<accession>Q62VF2</accession>
<sequence length="90" mass="10827">MEIRRQGLIVWLHSLKQAKMLRKFGNVHYVSKRLKYVVVYCNMEDAERIIAKIRSYSFVKQVDLSYKPFLKMEFESKQDKAKEYDYKAGL</sequence>
<evidence type="ECO:0000255" key="1">
    <source>
        <dbReference type="HAMAP-Rule" id="MF_01126"/>
    </source>
</evidence>
<comment type="subcellular location">
    <subcellularLocation>
        <location evidence="1">Cytoplasm</location>
    </subcellularLocation>
</comment>
<comment type="similarity">
    <text evidence="1">Belongs to the UPF0298 family.</text>
</comment>
<organism>
    <name type="scientific">Bacillus licheniformis (strain ATCC 14580 / DSM 13 / JCM 2505 / CCUG 7422 / NBRC 12200 / NCIMB 9375 / NCTC 10341 / NRRL NRS-1264 / Gibson 46)</name>
    <dbReference type="NCBI Taxonomy" id="279010"/>
    <lineage>
        <taxon>Bacteria</taxon>
        <taxon>Bacillati</taxon>
        <taxon>Bacillota</taxon>
        <taxon>Bacilli</taxon>
        <taxon>Bacillales</taxon>
        <taxon>Bacillaceae</taxon>
        <taxon>Bacillus</taxon>
    </lineage>
</organism>
<gene>
    <name type="ordered locus">BLi01717</name>
    <name type="ordered locus">BL02989</name>
</gene>